<protein>
    <recommendedName>
        <fullName>FK506-binding protein 3</fullName>
        <ecNumber>5.2.1.8</ecNumber>
    </recommendedName>
    <alternativeName>
        <fullName>Peptidyl-prolyl cis-trans isomerase</fullName>
        <shortName>PPIase</shortName>
    </alternativeName>
    <alternativeName>
        <fullName>Rotamase</fullName>
    </alternativeName>
</protein>
<name>FKBP3_DICDI</name>
<sequence length="194" mass="21190">MNKFLIALLVLATLAVSFSQEIGVSILKTDTPKGECKGKTASIGDYISLKYVGKFEDGTVFDSSEIHGGFSFNFTIGERKVIPGLEIGTINICEGEKRSIKIPYQLAYGENGIENAIPPRTDIYFDLEVVSIEGAPAQPFYYQLIPSVGTIIAFSMLAGFIVLVKFIIKRYPDESNSKKPAPGKPKKTKAAKQN</sequence>
<gene>
    <name type="primary">fkbp3</name>
    <name type="synonym">impA</name>
    <name type="ORF">DDB_G0285455</name>
</gene>
<comment type="function">
    <text evidence="1">PPIases accelerate the folding of proteins by catalyzing the cis-trans isomerization of proline imidic peptide bonds in oligopeptides.</text>
</comment>
<comment type="catalytic activity">
    <reaction>
        <text>[protein]-peptidylproline (omega=180) = [protein]-peptidylproline (omega=0)</text>
        <dbReference type="Rhea" id="RHEA:16237"/>
        <dbReference type="Rhea" id="RHEA-COMP:10747"/>
        <dbReference type="Rhea" id="RHEA-COMP:10748"/>
        <dbReference type="ChEBI" id="CHEBI:83833"/>
        <dbReference type="ChEBI" id="CHEBI:83834"/>
        <dbReference type="EC" id="5.2.1.8"/>
    </reaction>
</comment>
<comment type="activity regulation">
    <text evidence="1">Inhibited by both FK506 and rapamycin.</text>
</comment>
<comment type="subcellular location">
    <subcellularLocation>
        <location evidence="6">Membrane</location>
        <topology evidence="6">Single-pass membrane protein</topology>
    </subcellularLocation>
</comment>
<comment type="developmental stage">
    <text evidence="5">Highly expressed in growing cells. Expression levels decrease during the first few hours of development.</text>
</comment>
<comment type="similarity">
    <text evidence="6">Belongs to the FKBP-type PPIase family.</text>
</comment>
<keyword id="KW-0413">Isomerase</keyword>
<keyword id="KW-0472">Membrane</keyword>
<keyword id="KW-1185">Reference proteome</keyword>
<keyword id="KW-0697">Rotamase</keyword>
<keyword id="KW-0732">Signal</keyword>
<keyword id="KW-0812">Transmembrane</keyword>
<keyword id="KW-1133">Transmembrane helix</keyword>
<dbReference type="EC" id="5.2.1.8"/>
<dbReference type="EMBL" id="AAFI02000079">
    <property type="protein sequence ID" value="EAL64565.1"/>
    <property type="molecule type" value="Genomic_DNA"/>
</dbReference>
<dbReference type="RefSeq" id="XP_638063.1">
    <property type="nucleotide sequence ID" value="XM_632971.1"/>
</dbReference>
<dbReference type="SMR" id="Q54N80"/>
<dbReference type="STRING" id="44689.Q54N80"/>
<dbReference type="PaxDb" id="44689-DDB0232264"/>
<dbReference type="EnsemblProtists" id="EAL64565">
    <property type="protein sequence ID" value="EAL64565"/>
    <property type="gene ID" value="DDB_G0285455"/>
</dbReference>
<dbReference type="GeneID" id="8625109"/>
<dbReference type="KEGG" id="ddi:DDB_G0285455"/>
<dbReference type="dictyBase" id="DDB_G0285455">
    <property type="gene designation" value="impA"/>
</dbReference>
<dbReference type="VEuPathDB" id="AmoebaDB:DDB_G0285455"/>
<dbReference type="eggNOG" id="KOG0549">
    <property type="taxonomic scope" value="Eukaryota"/>
</dbReference>
<dbReference type="HOGENOM" id="CLU_1404823_0_0_1"/>
<dbReference type="InParanoid" id="Q54N80"/>
<dbReference type="OMA" id="FTIGERK"/>
<dbReference type="PhylomeDB" id="Q54N80"/>
<dbReference type="PRO" id="PR:Q54N80"/>
<dbReference type="Proteomes" id="UP000002195">
    <property type="component" value="Chromosome 4"/>
</dbReference>
<dbReference type="GO" id="GO:0005783">
    <property type="term" value="C:endoplasmic reticulum"/>
    <property type="evidence" value="ECO:0000318"/>
    <property type="project" value="GO_Central"/>
</dbReference>
<dbReference type="GO" id="GO:0016020">
    <property type="term" value="C:membrane"/>
    <property type="evidence" value="ECO:0007669"/>
    <property type="project" value="UniProtKB-SubCell"/>
</dbReference>
<dbReference type="GO" id="GO:0003755">
    <property type="term" value="F:peptidyl-prolyl cis-trans isomerase activity"/>
    <property type="evidence" value="ECO:0000318"/>
    <property type="project" value="GO_Central"/>
</dbReference>
<dbReference type="GO" id="GO:0019954">
    <property type="term" value="P:asexual reproduction"/>
    <property type="evidence" value="ECO:0000270"/>
    <property type="project" value="dictyBase"/>
</dbReference>
<dbReference type="GO" id="GO:0061077">
    <property type="term" value="P:chaperone-mediated protein folding"/>
    <property type="evidence" value="ECO:0007669"/>
    <property type="project" value="InterPro"/>
</dbReference>
<dbReference type="Gene3D" id="3.10.50.40">
    <property type="match status" value="1"/>
</dbReference>
<dbReference type="InterPro" id="IPR044609">
    <property type="entry name" value="FKBP2/11"/>
</dbReference>
<dbReference type="InterPro" id="IPR046357">
    <property type="entry name" value="PPIase_dom_sf"/>
</dbReference>
<dbReference type="InterPro" id="IPR001179">
    <property type="entry name" value="PPIase_FKBP_dom"/>
</dbReference>
<dbReference type="PANTHER" id="PTHR45779:SF15">
    <property type="entry name" value="FK506-BINDING PROTEIN 3"/>
    <property type="match status" value="1"/>
</dbReference>
<dbReference type="PANTHER" id="PTHR45779">
    <property type="entry name" value="PEPTIDYLPROLYL ISOMERASE"/>
    <property type="match status" value="1"/>
</dbReference>
<dbReference type="Pfam" id="PF00254">
    <property type="entry name" value="FKBP_C"/>
    <property type="match status" value="1"/>
</dbReference>
<dbReference type="SUPFAM" id="SSF54534">
    <property type="entry name" value="FKBP-like"/>
    <property type="match status" value="1"/>
</dbReference>
<dbReference type="PROSITE" id="PS50059">
    <property type="entry name" value="FKBP_PPIASE"/>
    <property type="match status" value="1"/>
</dbReference>
<organism>
    <name type="scientific">Dictyostelium discoideum</name>
    <name type="common">Social amoeba</name>
    <dbReference type="NCBI Taxonomy" id="44689"/>
    <lineage>
        <taxon>Eukaryota</taxon>
        <taxon>Amoebozoa</taxon>
        <taxon>Evosea</taxon>
        <taxon>Eumycetozoa</taxon>
        <taxon>Dictyostelia</taxon>
        <taxon>Dictyosteliales</taxon>
        <taxon>Dictyosteliaceae</taxon>
        <taxon>Dictyostelium</taxon>
    </lineage>
</organism>
<accession>Q54N80</accession>
<feature type="signal peptide" evidence="2">
    <location>
        <begin position="1"/>
        <end position="19"/>
    </location>
</feature>
<feature type="chain" id="PRO_0000331282" description="FK506-binding protein 3">
    <location>
        <begin position="20"/>
        <end position="194"/>
    </location>
</feature>
<feature type="transmembrane region" description="Helical" evidence="2">
    <location>
        <begin position="148"/>
        <end position="168"/>
    </location>
</feature>
<feature type="domain" description="PPIase FKBP-type" evidence="3">
    <location>
        <begin position="44"/>
        <end position="133"/>
    </location>
</feature>
<feature type="region of interest" description="Disordered" evidence="4">
    <location>
        <begin position="173"/>
        <end position="194"/>
    </location>
</feature>
<feature type="compositionally biased region" description="Basic residues" evidence="4">
    <location>
        <begin position="184"/>
        <end position="194"/>
    </location>
</feature>
<reference key="1">
    <citation type="journal article" date="2005" name="Nature">
        <title>The genome of the social amoeba Dictyostelium discoideum.</title>
        <authorList>
            <person name="Eichinger L."/>
            <person name="Pachebat J.A."/>
            <person name="Gloeckner G."/>
            <person name="Rajandream M.A."/>
            <person name="Sucgang R."/>
            <person name="Berriman M."/>
            <person name="Song J."/>
            <person name="Olsen R."/>
            <person name="Szafranski K."/>
            <person name="Xu Q."/>
            <person name="Tunggal B."/>
            <person name="Kummerfeld S."/>
            <person name="Madera M."/>
            <person name="Konfortov B.A."/>
            <person name="Rivero F."/>
            <person name="Bankier A.T."/>
            <person name="Lehmann R."/>
            <person name="Hamlin N."/>
            <person name="Davies R."/>
            <person name="Gaudet P."/>
            <person name="Fey P."/>
            <person name="Pilcher K."/>
            <person name="Chen G."/>
            <person name="Saunders D."/>
            <person name="Sodergren E.J."/>
            <person name="Davis P."/>
            <person name="Kerhornou A."/>
            <person name="Nie X."/>
            <person name="Hall N."/>
            <person name="Anjard C."/>
            <person name="Hemphill L."/>
            <person name="Bason N."/>
            <person name="Farbrother P."/>
            <person name="Desany B."/>
            <person name="Just E."/>
            <person name="Morio T."/>
            <person name="Rost R."/>
            <person name="Churcher C.M."/>
            <person name="Cooper J."/>
            <person name="Haydock S."/>
            <person name="van Driessche N."/>
            <person name="Cronin A."/>
            <person name="Goodhead I."/>
            <person name="Muzny D.M."/>
            <person name="Mourier T."/>
            <person name="Pain A."/>
            <person name="Lu M."/>
            <person name="Harper D."/>
            <person name="Lindsay R."/>
            <person name="Hauser H."/>
            <person name="James K.D."/>
            <person name="Quiles M."/>
            <person name="Madan Babu M."/>
            <person name="Saito T."/>
            <person name="Buchrieser C."/>
            <person name="Wardroper A."/>
            <person name="Felder M."/>
            <person name="Thangavelu M."/>
            <person name="Johnson D."/>
            <person name="Knights A."/>
            <person name="Loulseged H."/>
            <person name="Mungall K.L."/>
            <person name="Oliver K."/>
            <person name="Price C."/>
            <person name="Quail M.A."/>
            <person name="Urushihara H."/>
            <person name="Hernandez J."/>
            <person name="Rabbinowitsch E."/>
            <person name="Steffen D."/>
            <person name="Sanders M."/>
            <person name="Ma J."/>
            <person name="Kohara Y."/>
            <person name="Sharp S."/>
            <person name="Simmonds M.N."/>
            <person name="Spiegler S."/>
            <person name="Tivey A."/>
            <person name="Sugano S."/>
            <person name="White B."/>
            <person name="Walker D."/>
            <person name="Woodward J.R."/>
            <person name="Winckler T."/>
            <person name="Tanaka Y."/>
            <person name="Shaulsky G."/>
            <person name="Schleicher M."/>
            <person name="Weinstock G.M."/>
            <person name="Rosenthal A."/>
            <person name="Cox E.C."/>
            <person name="Chisholm R.L."/>
            <person name="Gibbs R.A."/>
            <person name="Loomis W.F."/>
            <person name="Platzer M."/>
            <person name="Kay R.R."/>
            <person name="Williams J.G."/>
            <person name="Dear P.H."/>
            <person name="Noegel A.A."/>
            <person name="Barrell B.G."/>
            <person name="Kuspa A."/>
        </authorList>
    </citation>
    <scope>NUCLEOTIDE SEQUENCE [LARGE SCALE GENOMIC DNA]</scope>
    <source>
        <strain>AX4</strain>
    </source>
</reference>
<reference key="2">
    <citation type="journal article" date="2005" name="Eukaryot. Cell">
        <title>Transcriptional switch of the dia1 and impA promoter during the growth/differentiation transition.</title>
        <authorList>
            <person name="Hirose S."/>
            <person name="Mayanagi T."/>
            <person name="Pears C."/>
            <person name="Amagai A."/>
            <person name="Loomis W.F."/>
            <person name="Maeda Y."/>
        </authorList>
    </citation>
    <scope>DEVELOPMENTAL STAGE</scope>
</reference>
<proteinExistence type="evidence at transcript level"/>
<evidence type="ECO:0000250" key="1"/>
<evidence type="ECO:0000255" key="2"/>
<evidence type="ECO:0000255" key="3">
    <source>
        <dbReference type="PROSITE-ProRule" id="PRU00277"/>
    </source>
</evidence>
<evidence type="ECO:0000256" key="4">
    <source>
        <dbReference type="SAM" id="MobiDB-lite"/>
    </source>
</evidence>
<evidence type="ECO:0000269" key="5">
    <source>
    </source>
</evidence>
<evidence type="ECO:0000305" key="6"/>